<comment type="function">
    <text evidence="1">F(1)F(0) ATP synthase produces ATP from ADP in the presence of a proton or sodium gradient. F-type ATPases consist of two structural domains, F(1) containing the extramembraneous catalytic core and F(0) containing the membrane proton channel, linked together by a central stalk and a peripheral stalk. During catalysis, ATP synthesis in the catalytic domain of F(1) is coupled via a rotary mechanism of the central stalk subunits to proton translocation.</text>
</comment>
<comment type="function">
    <text evidence="1">Component of the F(0) channel, it forms part of the peripheral stalk, linking F(1) to F(0).</text>
</comment>
<comment type="subunit">
    <text evidence="1">F-type ATPases have 2 components, F(1) - the catalytic core - and F(0) - the membrane proton channel. F(1) has five subunits: alpha(3), beta(3), gamma(1), delta(1), epsilon(1). F(0) has three main subunits: a(1), b(2) and c(10-14). The alpha and beta chains form an alternating ring which encloses part of the gamma chain. F(1) is attached to F(0) by a central stalk formed by the gamma and epsilon chains, while a peripheral stalk is formed by the delta and b chains.</text>
</comment>
<comment type="subcellular location">
    <subcellularLocation>
        <location evidence="1">Cell inner membrane</location>
        <topology evidence="1">Single-pass membrane protein</topology>
    </subcellularLocation>
</comment>
<comment type="similarity">
    <text evidence="1">Belongs to the ATPase B chain family.</text>
</comment>
<proteinExistence type="inferred from homology"/>
<keyword id="KW-0066">ATP synthesis</keyword>
<keyword id="KW-0997">Cell inner membrane</keyword>
<keyword id="KW-1003">Cell membrane</keyword>
<keyword id="KW-0138">CF(0)</keyword>
<keyword id="KW-0375">Hydrogen ion transport</keyword>
<keyword id="KW-0406">Ion transport</keyword>
<keyword id="KW-0472">Membrane</keyword>
<keyword id="KW-1185">Reference proteome</keyword>
<keyword id="KW-0812">Transmembrane</keyword>
<keyword id="KW-1133">Transmembrane helix</keyword>
<keyword id="KW-0813">Transport</keyword>
<evidence type="ECO:0000255" key="1">
    <source>
        <dbReference type="HAMAP-Rule" id="MF_01398"/>
    </source>
</evidence>
<dbReference type="EMBL" id="BX908798">
    <property type="protein sequence ID" value="CAF24396.1"/>
    <property type="molecule type" value="Genomic_DNA"/>
</dbReference>
<dbReference type="RefSeq" id="WP_011176218.1">
    <property type="nucleotide sequence ID" value="NC_005861.2"/>
</dbReference>
<dbReference type="SMR" id="Q6MAK3"/>
<dbReference type="STRING" id="264201.pc1672"/>
<dbReference type="KEGG" id="pcu:PC_RS07995"/>
<dbReference type="eggNOG" id="COG0711">
    <property type="taxonomic scope" value="Bacteria"/>
</dbReference>
<dbReference type="HOGENOM" id="CLU_079215_4_5_0"/>
<dbReference type="OrthoDB" id="21515at2"/>
<dbReference type="Proteomes" id="UP000000529">
    <property type="component" value="Chromosome"/>
</dbReference>
<dbReference type="GO" id="GO:0005886">
    <property type="term" value="C:plasma membrane"/>
    <property type="evidence" value="ECO:0007669"/>
    <property type="project" value="UniProtKB-SubCell"/>
</dbReference>
<dbReference type="GO" id="GO:0045259">
    <property type="term" value="C:proton-transporting ATP synthase complex"/>
    <property type="evidence" value="ECO:0007669"/>
    <property type="project" value="UniProtKB-KW"/>
</dbReference>
<dbReference type="GO" id="GO:0046933">
    <property type="term" value="F:proton-transporting ATP synthase activity, rotational mechanism"/>
    <property type="evidence" value="ECO:0007669"/>
    <property type="project" value="UniProtKB-UniRule"/>
</dbReference>
<dbReference type="GO" id="GO:0046961">
    <property type="term" value="F:proton-transporting ATPase activity, rotational mechanism"/>
    <property type="evidence" value="ECO:0007669"/>
    <property type="project" value="TreeGrafter"/>
</dbReference>
<dbReference type="CDD" id="cd06503">
    <property type="entry name" value="ATP-synt_Fo_b"/>
    <property type="match status" value="1"/>
</dbReference>
<dbReference type="HAMAP" id="MF_01398">
    <property type="entry name" value="ATP_synth_b_bprime"/>
    <property type="match status" value="1"/>
</dbReference>
<dbReference type="InterPro" id="IPR002146">
    <property type="entry name" value="ATP_synth_b/b'su_bac/chlpt"/>
</dbReference>
<dbReference type="InterPro" id="IPR005864">
    <property type="entry name" value="ATP_synth_F0_bsu_bac"/>
</dbReference>
<dbReference type="InterPro" id="IPR050059">
    <property type="entry name" value="ATP_synthase_B_chain"/>
</dbReference>
<dbReference type="NCBIfam" id="TIGR01144">
    <property type="entry name" value="ATP_synt_b"/>
    <property type="match status" value="1"/>
</dbReference>
<dbReference type="PANTHER" id="PTHR33445">
    <property type="entry name" value="ATP SYNTHASE SUBUNIT B', CHLOROPLASTIC"/>
    <property type="match status" value="1"/>
</dbReference>
<dbReference type="PANTHER" id="PTHR33445:SF2">
    <property type="entry name" value="ATP SYNTHASE SUBUNIT B', CHLOROPLASTIC"/>
    <property type="match status" value="1"/>
</dbReference>
<dbReference type="Pfam" id="PF00430">
    <property type="entry name" value="ATP-synt_B"/>
    <property type="match status" value="1"/>
</dbReference>
<gene>
    <name evidence="1" type="primary">atpF</name>
    <name type="ordered locus">pc1672</name>
</gene>
<organism>
    <name type="scientific">Protochlamydia amoebophila (strain UWE25)</name>
    <dbReference type="NCBI Taxonomy" id="264201"/>
    <lineage>
        <taxon>Bacteria</taxon>
        <taxon>Pseudomonadati</taxon>
        <taxon>Chlamydiota</taxon>
        <taxon>Chlamydiia</taxon>
        <taxon>Parachlamydiales</taxon>
        <taxon>Parachlamydiaceae</taxon>
        <taxon>Candidatus Protochlamydia</taxon>
    </lineage>
</organism>
<protein>
    <recommendedName>
        <fullName evidence="1">ATP synthase subunit b</fullName>
    </recommendedName>
    <alternativeName>
        <fullName evidence="1">ATP synthase F(0) sector subunit b</fullName>
    </alternativeName>
    <alternativeName>
        <fullName evidence="1">ATPase subunit I</fullName>
    </alternativeName>
    <alternativeName>
        <fullName evidence="1">F-type ATPase subunit b</fullName>
        <shortName evidence="1">F-ATPase subunit b</shortName>
    </alternativeName>
</protein>
<feature type="chain" id="PRO_0000368679" description="ATP synthase subunit b">
    <location>
        <begin position="1"/>
        <end position="160"/>
    </location>
</feature>
<feature type="transmembrane region" description="Helical" evidence="1">
    <location>
        <begin position="5"/>
        <end position="27"/>
    </location>
</feature>
<name>ATPF_PARUW</name>
<accession>Q6MAK3</accession>
<sequence length="160" mass="18873">MNFEIEQILTQIIAFLIMLGVLKKFVWKRLLNLIEERKQLIQSEFDKIENQKEEVTKLSEEYKAKLHDIDAEARRRIQEAVVKGRDIAHDIEQETRQKVTSLLNNAQEEMKLELAQAKEQLKKDVINISFAITEKLIHEKVDISKHQKLVEEAVEQVEIR</sequence>
<reference key="1">
    <citation type="journal article" date="2004" name="Science">
        <title>Illuminating the evolutionary history of chlamydiae.</title>
        <authorList>
            <person name="Horn M."/>
            <person name="Collingro A."/>
            <person name="Schmitz-Esser S."/>
            <person name="Beier C.L."/>
            <person name="Purkhold U."/>
            <person name="Fartmann B."/>
            <person name="Brandt P."/>
            <person name="Nyakatura G.J."/>
            <person name="Droege M."/>
            <person name="Frishman D."/>
            <person name="Rattei T."/>
            <person name="Mewes H.-W."/>
            <person name="Wagner M."/>
        </authorList>
    </citation>
    <scope>NUCLEOTIDE SEQUENCE [LARGE SCALE GENOMIC DNA]</scope>
    <source>
        <strain>UWE25</strain>
    </source>
</reference>